<dbReference type="EC" id="2.4.3.-" evidence="7"/>
<dbReference type="EMBL" id="Z46801">
    <property type="protein sequence ID" value="CAA86822.1"/>
    <property type="molecule type" value="mRNA"/>
</dbReference>
<dbReference type="PIR" id="S52425">
    <property type="entry name" value="S52425"/>
</dbReference>
<dbReference type="RefSeq" id="NP_001231179.1">
    <property type="nucleotide sequence ID" value="NM_001244250.1"/>
</dbReference>
<dbReference type="SMR" id="Q64690"/>
<dbReference type="DIP" id="DIP-59529N"/>
<dbReference type="IntAct" id="Q64690">
    <property type="interactions" value="2"/>
</dbReference>
<dbReference type="CAZy" id="GT29">
    <property type="family name" value="Glycosyltransferase Family 29"/>
</dbReference>
<dbReference type="GlyCosmos" id="Q64690">
    <property type="glycosylation" value="5 sites, No reported glycans"/>
</dbReference>
<dbReference type="PaxDb" id="10029-NP_001231179.1"/>
<dbReference type="GeneID" id="100689217"/>
<dbReference type="KEGG" id="cge:100689217"/>
<dbReference type="CTD" id="7903"/>
<dbReference type="eggNOG" id="KOG2692">
    <property type="taxonomic scope" value="Eukaryota"/>
</dbReference>
<dbReference type="OMA" id="HAAEGWK"/>
<dbReference type="OrthoDB" id="10264956at2759"/>
<dbReference type="UniPathway" id="UPA00378"/>
<dbReference type="Proteomes" id="UP000694386">
    <property type="component" value="Unplaced"/>
</dbReference>
<dbReference type="Proteomes" id="UP001108280">
    <property type="component" value="Chromosome 2"/>
</dbReference>
<dbReference type="GO" id="GO:0005576">
    <property type="term" value="C:extracellular region"/>
    <property type="evidence" value="ECO:0007669"/>
    <property type="project" value="UniProtKB-SubCell"/>
</dbReference>
<dbReference type="GO" id="GO:0000139">
    <property type="term" value="C:Golgi membrane"/>
    <property type="evidence" value="ECO:0007669"/>
    <property type="project" value="UniProtKB-SubCell"/>
</dbReference>
<dbReference type="GO" id="GO:0003828">
    <property type="term" value="F:alpha-N-acetylneuraminate alpha-2,8-sialyltransferase activity"/>
    <property type="evidence" value="ECO:0007669"/>
    <property type="project" value="TreeGrafter"/>
</dbReference>
<dbReference type="GO" id="GO:0008373">
    <property type="term" value="F:sialyltransferase activity"/>
    <property type="evidence" value="ECO:0000250"/>
    <property type="project" value="UniProtKB"/>
</dbReference>
<dbReference type="GO" id="GO:0006491">
    <property type="term" value="P:N-glycan processing"/>
    <property type="evidence" value="ECO:0007669"/>
    <property type="project" value="TreeGrafter"/>
</dbReference>
<dbReference type="GO" id="GO:0009311">
    <property type="term" value="P:oligosaccharide metabolic process"/>
    <property type="evidence" value="ECO:0007669"/>
    <property type="project" value="TreeGrafter"/>
</dbReference>
<dbReference type="GO" id="GO:0006486">
    <property type="term" value="P:protein glycosylation"/>
    <property type="evidence" value="ECO:0007669"/>
    <property type="project" value="UniProtKB-UniPathway"/>
</dbReference>
<dbReference type="GO" id="GO:0097503">
    <property type="term" value="P:sialylation"/>
    <property type="evidence" value="ECO:0000250"/>
    <property type="project" value="UniProtKB"/>
</dbReference>
<dbReference type="CDD" id="cd23988">
    <property type="entry name" value="GT29_ST8SIA4"/>
    <property type="match status" value="1"/>
</dbReference>
<dbReference type="FunFam" id="3.90.1480.20:FF:000001">
    <property type="entry name" value="ST8 alpha-N-acetyl-neuraminide alpha-2,8-sialyltransferase 2"/>
    <property type="match status" value="1"/>
</dbReference>
<dbReference type="Gene3D" id="3.90.1480.20">
    <property type="entry name" value="Glycosyl transferase family 29"/>
    <property type="match status" value="1"/>
</dbReference>
<dbReference type="InterPro" id="IPR001675">
    <property type="entry name" value="Glyco_trans_29"/>
</dbReference>
<dbReference type="InterPro" id="IPR050943">
    <property type="entry name" value="Glycosyltr_29_Sialyltrsf"/>
</dbReference>
<dbReference type="InterPro" id="IPR038578">
    <property type="entry name" value="GT29-like_sf"/>
</dbReference>
<dbReference type="InterPro" id="IPR012163">
    <property type="entry name" value="Sialyl_trans"/>
</dbReference>
<dbReference type="PANTHER" id="PTHR11987">
    <property type="entry name" value="ALPHA-2,8-SIALYLTRANSFERASE"/>
    <property type="match status" value="1"/>
</dbReference>
<dbReference type="PANTHER" id="PTHR11987:SF48">
    <property type="entry name" value="CMP-N-ACETYLNEURAMINATE-POLY-ALPHA-2,8-SIALYLTRANSFERASE"/>
    <property type="match status" value="1"/>
</dbReference>
<dbReference type="Pfam" id="PF00777">
    <property type="entry name" value="Glyco_transf_29"/>
    <property type="match status" value="1"/>
</dbReference>
<dbReference type="PIRSF" id="PIRSF005557">
    <property type="entry name" value="Sialyl_trans"/>
    <property type="match status" value="1"/>
</dbReference>
<evidence type="ECO:0000250" key="1">
    <source>
        <dbReference type="UniProtKB" id="O43173"/>
    </source>
</evidence>
<evidence type="ECO:0000250" key="2">
    <source>
        <dbReference type="UniProtKB" id="Q92187"/>
    </source>
</evidence>
<evidence type="ECO:0000255" key="3"/>
<evidence type="ECO:0000269" key="4">
    <source>
    </source>
</evidence>
<evidence type="ECO:0000303" key="5">
    <source>
    </source>
</evidence>
<evidence type="ECO:0000305" key="6"/>
<evidence type="ECO:0000305" key="7">
    <source>
    </source>
</evidence>
<proteinExistence type="evidence at protein level"/>
<gene>
    <name evidence="2" type="primary">ST8SIA4</name>
    <name evidence="5" type="synonym">PST-1</name>
    <name type="synonym">PST1</name>
    <name type="synonym">SIAT8D</name>
</gene>
<name>SIA8D_CRIGR</name>
<feature type="chain" id="PRO_0000149292" description="CMP-N-acetylneuraminate-poly-alpha-2,8-sialyltransferase">
    <location>
        <begin position="1"/>
        <end position="359"/>
    </location>
</feature>
<feature type="topological domain" description="Cytoplasmic" evidence="3">
    <location>
        <begin position="1"/>
        <end position="7"/>
    </location>
</feature>
<feature type="transmembrane region" description="Helical; Signal-anchor for type II membrane protein" evidence="3">
    <location>
        <begin position="8"/>
        <end position="20"/>
    </location>
</feature>
<feature type="topological domain" description="Lumenal" evidence="3">
    <location>
        <begin position="21"/>
        <end position="359"/>
    </location>
</feature>
<feature type="active site" description="Proton donor/acceptor" evidence="1">
    <location>
        <position position="331"/>
    </location>
</feature>
<feature type="binding site" evidence="1">
    <location>
        <position position="147"/>
    </location>
    <ligand>
        <name>CMP-N-acetyl-beta-neuraminate</name>
        <dbReference type="ChEBI" id="CHEBI:57812"/>
    </ligand>
</feature>
<feature type="binding site" evidence="1">
    <location>
        <position position="170"/>
    </location>
    <ligand>
        <name>CMP-N-acetyl-beta-neuraminate</name>
        <dbReference type="ChEBI" id="CHEBI:57812"/>
    </ligand>
</feature>
<feature type="binding site" evidence="1">
    <location>
        <position position="279"/>
    </location>
    <ligand>
        <name>CMP-N-acetyl-beta-neuraminate</name>
        <dbReference type="ChEBI" id="CHEBI:57812"/>
    </ligand>
</feature>
<feature type="binding site" evidence="1">
    <location>
        <position position="280"/>
    </location>
    <ligand>
        <name>CMP-N-acetyl-beta-neuraminate</name>
        <dbReference type="ChEBI" id="CHEBI:57812"/>
    </ligand>
</feature>
<feature type="binding site" evidence="1">
    <location>
        <position position="281"/>
    </location>
    <ligand>
        <name>CMP-N-acetyl-beta-neuraminate</name>
        <dbReference type="ChEBI" id="CHEBI:57812"/>
    </ligand>
</feature>
<feature type="binding site" evidence="1">
    <location>
        <position position="301"/>
    </location>
    <ligand>
        <name>CMP-N-acetyl-beta-neuraminate</name>
        <dbReference type="ChEBI" id="CHEBI:57812"/>
    </ligand>
</feature>
<feature type="glycosylation site" description="N-linked (GlcNAc...) asparagine" evidence="3">
    <location>
        <position position="50"/>
    </location>
</feature>
<feature type="glycosylation site" description="N-linked (GlcNAc...) asparagine" evidence="3">
    <location>
        <position position="74"/>
    </location>
</feature>
<feature type="glycosylation site" description="N-linked (GlcNAc...) asparagine" evidence="3">
    <location>
        <position position="119"/>
    </location>
</feature>
<feature type="glycosylation site" description="N-linked (GlcNAc...) asparagine" evidence="3">
    <location>
        <position position="204"/>
    </location>
</feature>
<feature type="glycosylation site" description="N-linked (GlcNAc...) asparagine" evidence="3">
    <location>
        <position position="219"/>
    </location>
</feature>
<feature type="disulfide bond" evidence="1">
    <location>
        <begin position="142"/>
        <end position="292"/>
    </location>
</feature>
<feature type="disulfide bond" evidence="1">
    <location>
        <begin position="156"/>
        <end position="356"/>
    </location>
</feature>
<comment type="function">
    <text evidence="2 4 7">Catalyzes the transfer of a sialic acid from a CMP-linked sialic acid donor onto a terminal alpha-2,3-, alpha-2,6-, or alpha-2,8-linked sialic acid of an N-linked glycan protein acceptor through alpha-2,8-linkages (Probable). Therefore, participates in polysialic acid synthesis on various sialylated N-acetyllactosaminyl oligosaccharides, including NCAM1 N-glycans, FETUB N-glycans and AHSG (PubMed:9774483). It is noteworthy that alpha-2,3-linked sialic acid is apparently a better acceptor than alpha-2,6-linked sialic acid (By similarity).</text>
</comment>
<comment type="catalytic activity">
    <reaction evidence="7">
        <text>[N-acetyl-alpha-D-neuraminosyl-(2-&gt;8)](n) + CMP-N-acetyl-beta-neuraminate = [N-acetyl-alpha-D-neuraminosyl-(2-&gt;8)](n+1) + CMP + H(+)</text>
        <dbReference type="Rhea" id="RHEA:77367"/>
        <dbReference type="Rhea" id="RHEA-COMP:14315"/>
        <dbReference type="Rhea" id="RHEA-COMP:18878"/>
        <dbReference type="ChEBI" id="CHEBI:15378"/>
        <dbReference type="ChEBI" id="CHEBI:57812"/>
        <dbReference type="ChEBI" id="CHEBI:60377"/>
        <dbReference type="ChEBI" id="CHEBI:139252"/>
    </reaction>
    <physiologicalReaction direction="left-to-right" evidence="7">
        <dbReference type="Rhea" id="RHEA:77368"/>
    </physiologicalReaction>
</comment>
<comment type="pathway">
    <text evidence="4">Protein modification; protein glycosylation.</text>
</comment>
<comment type="interaction">
    <interactant intactId="EBI-15854853">
        <id>Q64690</id>
    </interactant>
    <interactant intactId="EBI-5652260">
        <id>Q9BY67</id>
        <label>CADM1</label>
    </interactant>
    <organismsDiffer>true</organismsDiffer>
    <experiments>2</experiments>
</comment>
<comment type="subcellular location">
    <subcellularLocation>
        <location evidence="2">Golgi apparatus membrane</location>
        <topology evidence="2">Single-pass type II membrane protein</topology>
    </subcellularLocation>
    <subcellularLocation>
        <location evidence="2">Secreted</location>
    </subcellularLocation>
</comment>
<comment type="PTM">
    <text evidence="2">Autopolysialylated.</text>
</comment>
<comment type="similarity">
    <text evidence="6">Belongs to the glycosyltransferase 29 family.</text>
</comment>
<keyword id="KW-1015">Disulfide bond</keyword>
<keyword id="KW-0325">Glycoprotein</keyword>
<keyword id="KW-0328">Glycosyltransferase</keyword>
<keyword id="KW-0333">Golgi apparatus</keyword>
<keyword id="KW-0472">Membrane</keyword>
<keyword id="KW-0964">Secreted</keyword>
<keyword id="KW-0735">Signal-anchor</keyword>
<keyword id="KW-0808">Transferase</keyword>
<keyword id="KW-0812">Transmembrane</keyword>
<keyword id="KW-1133">Transmembrane helix</keyword>
<accession>Q64690</accession>
<reference key="1">
    <citation type="journal article" date="1995" name="Nature">
        <title>Molecular characterization of eukaryotic polysialyltransferase-1.</title>
        <authorList>
            <person name="Eckhardt M."/>
            <person name="Muehlenhoff M."/>
            <person name="Bethe A."/>
            <person name="Koopman J."/>
            <person name="Frosch M."/>
            <person name="Gerardy-Schahn R."/>
        </authorList>
    </citation>
    <scope>NUCLEOTIDE SEQUENCE [MRNA]</scope>
</reference>
<reference key="2">
    <citation type="journal article" date="1998" name="J. Biol. Chem.">
        <title>Differential and cooperative polysialylation of the neural cell adhesion molecule by two polysialyltransferases, PST and STX.</title>
        <authorList>
            <person name="Angata K."/>
            <person name="Suzuki M."/>
            <person name="Fukuda M."/>
        </authorList>
    </citation>
    <scope>FUNCTION</scope>
    <scope>CATALYTIC ACTIVITY</scope>
</reference>
<protein>
    <recommendedName>
        <fullName evidence="2">CMP-N-acetylneuraminate-poly-alpha-2,8-sialyltransferase</fullName>
        <ecNumber evidence="7">2.4.3.-</ecNumber>
    </recommendedName>
    <alternativeName>
        <fullName>Alpha-2,8-sialyltransferase 8D</fullName>
    </alternativeName>
    <alternativeName>
        <fullName>Polysialyltransferase-1</fullName>
    </alternativeName>
    <alternativeName>
        <fullName>Sialyltransferase 8D</fullName>
        <shortName>SIAT8-D</shortName>
    </alternativeName>
    <alternativeName>
        <fullName>Sialyltransferase St8Sia IV</fullName>
        <shortName>ST8SiaIV</shortName>
    </alternativeName>
</protein>
<organism>
    <name type="scientific">Cricetulus griseus</name>
    <name type="common">Chinese hamster</name>
    <name type="synonym">Cricetulus barabensis griseus</name>
    <dbReference type="NCBI Taxonomy" id="10029"/>
    <lineage>
        <taxon>Eukaryota</taxon>
        <taxon>Metazoa</taxon>
        <taxon>Chordata</taxon>
        <taxon>Craniata</taxon>
        <taxon>Vertebrata</taxon>
        <taxon>Euteleostomi</taxon>
        <taxon>Mammalia</taxon>
        <taxon>Eutheria</taxon>
        <taxon>Euarchontoglires</taxon>
        <taxon>Glires</taxon>
        <taxon>Rodentia</taxon>
        <taxon>Myomorpha</taxon>
        <taxon>Muroidea</taxon>
        <taxon>Cricetidae</taxon>
        <taxon>Cricetinae</taxon>
        <taxon>Cricetulus</taxon>
    </lineage>
</organism>
<sequence>MRSIRKRWTICTISLLLIFYKTKEIARTEEHQETQLIGDGELCLSRSLVNSSDKIIRKAGSTIFQHSVQGWRINSSLVLEIRKNILRFLDAERDVSVVKSSFKPGDVIHYVLDRRRTLNISHDLHSLLPEVSPMKNRRFKTCAVVGNSGILLDSGCGKEIDSHNFVIRCNLAPVVEFAADVGTKSDFITMNPSVVQRAFGGFRNESDRAKFVHRLSMLNDSVLWIPAFMVKGGEKHVEWVNALILKNKLKVRTAYPSLRLIHAVRGYWLTNKVPIKRPSTGLLMYTLATRFCDEIHLYGFWPFPKDLNGKAVKYHYYDDLKYRYFSNASPHRMPLEFKTLNVLHNRGALKLTTGKCMKQ</sequence>